<gene>
    <name type="primary">cgtA</name>
</gene>
<comment type="catalytic activity">
    <reaction>
        <text>Cyclizes part of a (1-&gt;4)-alpha-D-glucan chain by formation of a (1-&gt;4)-alpha-D-glucosidic bond.</text>
        <dbReference type="EC" id="2.4.1.19"/>
    </reaction>
</comment>
<comment type="cofactor">
    <cofactor evidence="1">
        <name>Ca(2+)</name>
        <dbReference type="ChEBI" id="CHEBI:29108"/>
    </cofactor>
    <text evidence="1">Binds 2 calcium ions per subunit.</text>
</comment>
<comment type="subunit">
    <text>Monomer.</text>
</comment>
<comment type="subcellular location">
    <subcellularLocation>
        <location evidence="1">Secreted</location>
    </subcellularLocation>
</comment>
<comment type="domain">
    <text>May consist of two protein domains: the one in the N-terminal side cleaves the alpha-1,4-glucosidic bond in starch, and the other in the C-terminal side catalyzes other activities, including the reconstitution of an alpha-1,4-glucosidic linkage for cyclizing the maltooligosaccharide produced.</text>
</comment>
<comment type="similarity">
    <text evidence="3">Belongs to the glycosyl hydrolase 13 family.</text>
</comment>
<accession>P14014</accession>
<dbReference type="EC" id="2.4.1.19"/>
<dbReference type="EMBL" id="X15752">
    <property type="protein sequence ID" value="CAA33763.1"/>
    <property type="molecule type" value="Genomic_DNA"/>
</dbReference>
<dbReference type="PIR" id="S15920">
    <property type="entry name" value="ALBSMX"/>
</dbReference>
<dbReference type="SMR" id="P14014"/>
<dbReference type="CAZy" id="CBM20">
    <property type="family name" value="Carbohydrate-Binding Module Family 20"/>
</dbReference>
<dbReference type="CAZy" id="GH13">
    <property type="family name" value="Glycoside Hydrolase Family 13"/>
</dbReference>
<dbReference type="BRENDA" id="2.4.1.19">
    <property type="organism ID" value="669"/>
</dbReference>
<dbReference type="GO" id="GO:0005576">
    <property type="term" value="C:extracellular region"/>
    <property type="evidence" value="ECO:0007669"/>
    <property type="project" value="UniProtKB-SubCell"/>
</dbReference>
<dbReference type="GO" id="GO:0004556">
    <property type="term" value="F:alpha-amylase activity"/>
    <property type="evidence" value="ECO:0007669"/>
    <property type="project" value="InterPro"/>
</dbReference>
<dbReference type="GO" id="GO:0043895">
    <property type="term" value="F:cyclomaltodextrin glucanotransferase activity"/>
    <property type="evidence" value="ECO:0007669"/>
    <property type="project" value="UniProtKB-EC"/>
</dbReference>
<dbReference type="GO" id="GO:0046872">
    <property type="term" value="F:metal ion binding"/>
    <property type="evidence" value="ECO:0007669"/>
    <property type="project" value="UniProtKB-KW"/>
</dbReference>
<dbReference type="GO" id="GO:2001070">
    <property type="term" value="F:starch binding"/>
    <property type="evidence" value="ECO:0007669"/>
    <property type="project" value="InterPro"/>
</dbReference>
<dbReference type="GO" id="GO:0005975">
    <property type="term" value="P:carbohydrate metabolic process"/>
    <property type="evidence" value="ECO:0007669"/>
    <property type="project" value="InterPro"/>
</dbReference>
<dbReference type="CDD" id="cd11320">
    <property type="entry name" value="AmyAc_AmyMalt_CGTase_like"/>
    <property type="match status" value="1"/>
</dbReference>
<dbReference type="CDD" id="cd00604">
    <property type="entry name" value="IPT_CGTD"/>
    <property type="match status" value="1"/>
</dbReference>
<dbReference type="Gene3D" id="3.20.20.80">
    <property type="entry name" value="Glycosidases"/>
    <property type="match status" value="1"/>
</dbReference>
<dbReference type="Gene3D" id="2.60.40.1180">
    <property type="entry name" value="Golgi alpha-mannosidase II"/>
    <property type="match status" value="1"/>
</dbReference>
<dbReference type="Gene3D" id="2.60.40.10">
    <property type="entry name" value="Immunoglobulins"/>
    <property type="match status" value="2"/>
</dbReference>
<dbReference type="InterPro" id="IPR006048">
    <property type="entry name" value="A-amylase/branching_C"/>
</dbReference>
<dbReference type="InterPro" id="IPR031319">
    <property type="entry name" value="A-amylase_C"/>
</dbReference>
<dbReference type="InterPro" id="IPR006046">
    <property type="entry name" value="Alpha_amylase"/>
</dbReference>
<dbReference type="InterPro" id="IPR013784">
    <property type="entry name" value="Carb-bd-like_fold"/>
</dbReference>
<dbReference type="InterPro" id="IPR002044">
    <property type="entry name" value="CBM20"/>
</dbReference>
<dbReference type="InterPro" id="IPR006047">
    <property type="entry name" value="Glyco_hydro_13_cat_dom"/>
</dbReference>
<dbReference type="InterPro" id="IPR013780">
    <property type="entry name" value="Glyco_hydro_b"/>
</dbReference>
<dbReference type="InterPro" id="IPR017853">
    <property type="entry name" value="Glycoside_hydrolase_SF"/>
</dbReference>
<dbReference type="InterPro" id="IPR013783">
    <property type="entry name" value="Ig-like_fold"/>
</dbReference>
<dbReference type="InterPro" id="IPR014756">
    <property type="entry name" value="Ig_E-set"/>
</dbReference>
<dbReference type="InterPro" id="IPR002909">
    <property type="entry name" value="IPT_dom"/>
</dbReference>
<dbReference type="PANTHER" id="PTHR10357:SF215">
    <property type="entry name" value="ALPHA-AMYLASE 1"/>
    <property type="match status" value="1"/>
</dbReference>
<dbReference type="PANTHER" id="PTHR10357">
    <property type="entry name" value="ALPHA-AMYLASE FAMILY MEMBER"/>
    <property type="match status" value="1"/>
</dbReference>
<dbReference type="Pfam" id="PF00128">
    <property type="entry name" value="Alpha-amylase"/>
    <property type="match status" value="1"/>
</dbReference>
<dbReference type="Pfam" id="PF02806">
    <property type="entry name" value="Alpha-amylase_C"/>
    <property type="match status" value="1"/>
</dbReference>
<dbReference type="Pfam" id="PF00686">
    <property type="entry name" value="CBM_20"/>
    <property type="match status" value="1"/>
</dbReference>
<dbReference type="Pfam" id="PF01833">
    <property type="entry name" value="TIG"/>
    <property type="match status" value="1"/>
</dbReference>
<dbReference type="PRINTS" id="PR00110">
    <property type="entry name" value="ALPHAAMYLASE"/>
</dbReference>
<dbReference type="SMART" id="SM00642">
    <property type="entry name" value="Aamy"/>
    <property type="match status" value="1"/>
</dbReference>
<dbReference type="SMART" id="SM00632">
    <property type="entry name" value="Aamy_C"/>
    <property type="match status" value="1"/>
</dbReference>
<dbReference type="SMART" id="SM01065">
    <property type="entry name" value="CBM_2"/>
    <property type="match status" value="1"/>
</dbReference>
<dbReference type="SUPFAM" id="SSF51445">
    <property type="entry name" value="(Trans)glycosidases"/>
    <property type="match status" value="1"/>
</dbReference>
<dbReference type="SUPFAM" id="SSF81296">
    <property type="entry name" value="E set domains"/>
    <property type="match status" value="1"/>
</dbReference>
<dbReference type="SUPFAM" id="SSF51011">
    <property type="entry name" value="Glycosyl hydrolase domain"/>
    <property type="match status" value="1"/>
</dbReference>
<dbReference type="SUPFAM" id="SSF49452">
    <property type="entry name" value="Starch-binding domain-like"/>
    <property type="match status" value="1"/>
</dbReference>
<dbReference type="PROSITE" id="PS51166">
    <property type="entry name" value="CBM20"/>
    <property type="match status" value="1"/>
</dbReference>
<protein>
    <recommendedName>
        <fullName>Cyclomaltodextrin glucanotransferase</fullName>
        <ecNumber>2.4.1.19</ecNumber>
    </recommendedName>
    <alternativeName>
        <fullName>Cyclodextrin-glycosyltransferase</fullName>
        <shortName>CGTase</shortName>
    </alternativeName>
</protein>
<proteinExistence type="inferred from homology"/>
<evidence type="ECO:0000250" key="1"/>
<evidence type="ECO:0000255" key="2">
    <source>
        <dbReference type="PROSITE-ProRule" id="PRU00594"/>
    </source>
</evidence>
<evidence type="ECO:0000305" key="3"/>
<name>CDGT_BACLI</name>
<keyword id="KW-0106">Calcium</keyword>
<keyword id="KW-1015">Disulfide bond</keyword>
<keyword id="KW-0328">Glycosyltransferase</keyword>
<keyword id="KW-0479">Metal-binding</keyword>
<keyword id="KW-0964">Secreted</keyword>
<keyword id="KW-0732">Signal</keyword>
<keyword id="KW-0808">Transferase</keyword>
<feature type="signal peptide" evidence="1">
    <location>
        <begin position="1"/>
        <end position="34"/>
    </location>
</feature>
<feature type="chain" id="PRO_0000001432" description="Cyclomaltodextrin glucanotransferase">
    <location>
        <begin position="35"/>
        <end position="718"/>
    </location>
</feature>
<feature type="domain" description="IPT/TIG">
    <location>
        <begin position="532"/>
        <end position="612"/>
    </location>
</feature>
<feature type="domain" description="CBM20" evidence="2">
    <location>
        <begin position="613"/>
        <end position="718"/>
    </location>
</feature>
<feature type="region of interest" description="A1">
    <location>
        <begin position="35"/>
        <end position="172"/>
    </location>
</feature>
<feature type="region of interest" description="B">
    <location>
        <begin position="173"/>
        <end position="236"/>
    </location>
</feature>
<feature type="region of interest" description="A2">
    <location>
        <begin position="237"/>
        <end position="440"/>
    </location>
</feature>
<feature type="region of interest" description="C">
    <location>
        <begin position="441"/>
        <end position="528"/>
    </location>
</feature>
<feature type="region of interest" description="D">
    <location>
        <begin position="529"/>
        <end position="614"/>
    </location>
</feature>
<feature type="region of interest" description="E">
    <location>
        <begin position="615"/>
        <end position="718"/>
    </location>
</feature>
<feature type="active site" description="Nucleophile" evidence="1">
    <location>
        <position position="263"/>
    </location>
</feature>
<feature type="active site" description="Proton donor" evidence="1">
    <location>
        <position position="291"/>
    </location>
</feature>
<feature type="binding site" evidence="1">
    <location>
        <position position="61"/>
    </location>
    <ligand>
        <name>Ca(2+)</name>
        <dbReference type="ChEBI" id="CHEBI:29108"/>
        <label>1</label>
    </ligand>
</feature>
<feature type="binding site" evidence="1">
    <location>
        <position position="63"/>
    </location>
    <ligand>
        <name>Ca(2+)</name>
        <dbReference type="ChEBI" id="CHEBI:29108"/>
        <label>1</label>
    </ligand>
</feature>
<feature type="binding site" evidence="1">
    <location>
        <position position="66"/>
    </location>
    <ligand>
        <name>Ca(2+)</name>
        <dbReference type="ChEBI" id="CHEBI:29108"/>
        <label>1</label>
    </ligand>
</feature>
<feature type="binding site" evidence="1">
    <location>
        <position position="67"/>
    </location>
    <ligand>
        <name>Ca(2+)</name>
        <dbReference type="ChEBI" id="CHEBI:29108"/>
        <label>1</label>
    </ligand>
</feature>
<feature type="binding site" evidence="1">
    <location>
        <position position="85"/>
    </location>
    <ligand>
        <name>Ca(2+)</name>
        <dbReference type="ChEBI" id="CHEBI:29108"/>
        <label>1</label>
    </ligand>
</feature>
<feature type="binding site" evidence="1">
    <location>
        <position position="87"/>
    </location>
    <ligand>
        <name>Ca(2+)</name>
        <dbReference type="ChEBI" id="CHEBI:29108"/>
        <label>1</label>
    </ligand>
</feature>
<feature type="binding site" evidence="1">
    <location>
        <begin position="134"/>
        <end position="135"/>
    </location>
    <ligand>
        <name>substrate</name>
    </ligand>
</feature>
<feature type="binding site" evidence="1">
    <location>
        <position position="173"/>
    </location>
    <ligand>
        <name>Ca(2+)</name>
        <dbReference type="ChEBI" id="CHEBI:29108"/>
        <label>2</label>
    </ligand>
</feature>
<feature type="binding site" evidence="1">
    <location>
        <position position="174"/>
    </location>
    <ligand>
        <name>substrate</name>
    </ligand>
</feature>
<feature type="binding site" evidence="1">
    <location>
        <position position="224"/>
    </location>
    <ligand>
        <name>Ca(2+)</name>
        <dbReference type="ChEBI" id="CHEBI:29108"/>
        <label>2</label>
    </ligand>
</feature>
<feature type="binding site" evidence="1">
    <location>
        <begin position="227"/>
        <end position="230"/>
    </location>
    <ligand>
        <name>substrate</name>
    </ligand>
</feature>
<feature type="binding site" evidence="1">
    <location>
        <position position="233"/>
    </location>
    <ligand>
        <name>Ca(2+)</name>
        <dbReference type="ChEBI" id="CHEBI:29108"/>
        <label>2</label>
    </ligand>
</feature>
<feature type="binding site" evidence="1">
    <location>
        <position position="261"/>
    </location>
    <ligand>
        <name>substrate</name>
    </ligand>
</feature>
<feature type="binding site" evidence="1">
    <location>
        <begin position="266"/>
        <end position="267"/>
    </location>
    <ligand>
        <name>substrate</name>
    </ligand>
</feature>
<feature type="binding site" evidence="1">
    <location>
        <position position="267"/>
    </location>
    <ligand>
        <name>Ca(2+)</name>
        <dbReference type="ChEBI" id="CHEBI:29108"/>
        <label>2</label>
    </ligand>
</feature>
<feature type="binding site" evidence="1">
    <location>
        <position position="361"/>
    </location>
    <ligand>
        <name>substrate</name>
    </ligand>
</feature>
<feature type="binding site" evidence="1">
    <location>
        <position position="405"/>
    </location>
    <ligand>
        <name>substrate</name>
    </ligand>
</feature>
<feature type="binding site" evidence="1">
    <location>
        <position position="409"/>
    </location>
    <ligand>
        <name>substrate</name>
    </ligand>
</feature>
<feature type="site" description="Transition state stabilizer" evidence="1">
    <location>
        <position position="362"/>
    </location>
</feature>
<feature type="disulfide bond" evidence="1">
    <location>
        <begin position="77"/>
        <end position="84"/>
    </location>
</feature>
<organism>
    <name type="scientific">Bacillus licheniformis</name>
    <dbReference type="NCBI Taxonomy" id="1402"/>
    <lineage>
        <taxon>Bacteria</taxon>
        <taxon>Bacillati</taxon>
        <taxon>Bacillota</taxon>
        <taxon>Bacilli</taxon>
        <taxon>Bacillales</taxon>
        <taxon>Bacillaceae</taxon>
        <taxon>Bacillus</taxon>
    </lineage>
</organism>
<sequence length="718" mass="78003">MFQMAKRVLLSTTLTFSLLAGSALPFLPASAIYADADTAVTNKQNFSTDVIYQVFTDRFLDGNPSNNPTGAAFDGTCSNLKLYCGGDWQGLVNKINDNYFSDLGVTALWISQPVENIFATINYSGVTNTAYHGYWARDFKKTNPYFGTMTDFQNLVTTAHAKGIKIIIDFAPNHTSPAMETDTSFAENGKLYDNGNLVGGYTNDTNGYFHHNGGSDFSTLENGIYKNLYDLADLNHNNSTIDTYFKDAIKLWLDMGVDGIRVDAVKHMPQGWQKNWMSSIYAHKPVFTFGEWFLGSAAPDADNTDFANESGMSLLDFRFNSAVRNVFRDNTSNMYALDSMLTATAADYNQVNDQVTFIDNHDMDRFKTSAVNNRRLEQALAFTLTSRGVPAIYYGTEQYLTGNGDPDNRGKMPSFSKSTTAFNVISKLAPLRKSNPAIAYGSTQQRWINNDVYIYERKFGKSVAVVAVNRNLTTPTSITNLNTSLPSGTYTDVLGGVLNGNNITSSGGNISSFTLAAGATAVWQYTASETTPTIGHVGPVMGKPGNVVTIDGRGFGSAKGTVYFGTTAVTGSAITSWEDTQIKVTIPPVAGGDYAVKVAANGVNSNAYNDFTILSGDQVSVRFVINNATTALGENIYLTGNVSELGNWTTGAASIGPAFNQVIHAYPTWYYDVSVPAGKQLEFKFFKKNGATITWEGGSNHTFTTPTSGTATVTINWQ</sequence>
<reference key="1">
    <citation type="journal article" date="1990" name="Nucleic Acids Res.">
        <title>Nucleotide sequence of a cyclodextrin glucosyltransferase gene, cgtA, from Bacillus licheniformis.</title>
        <authorList>
            <person name="Hill D.E."/>
            <person name="Aldape R."/>
            <person name="Rozzell J.D."/>
        </authorList>
    </citation>
    <scope>NUCLEOTIDE SEQUENCE [GENOMIC DNA]</scope>
</reference>